<sequence length="66" mass="7518">MAVPKKKTSKSRRNMRRSHLALGKVNVIVDSQTGEYKLPHHVSLIDGTYNNRQVVTKKIETEEEVA</sequence>
<reference key="1">
    <citation type="submission" date="2007-09" db="EMBL/GenBank/DDBJ databases">
        <title>Complete genome sequencing of Rickettsia bellii.</title>
        <authorList>
            <person name="Madan A."/>
            <person name="Lee H."/>
            <person name="Madan A."/>
            <person name="Yoon J.-G."/>
            <person name="Ryu G.-Y."/>
            <person name="Dasch G."/>
            <person name="Ereemeva M."/>
        </authorList>
    </citation>
    <scope>NUCLEOTIDE SEQUENCE [LARGE SCALE GENOMIC DNA]</scope>
    <source>
        <strain>OSU 85-389</strain>
    </source>
</reference>
<name>RL32_RICB8</name>
<feature type="chain" id="PRO_1000005074" description="Large ribosomal subunit protein bL32">
    <location>
        <begin position="1"/>
        <end position="66"/>
    </location>
</feature>
<protein>
    <recommendedName>
        <fullName evidence="1">Large ribosomal subunit protein bL32</fullName>
    </recommendedName>
    <alternativeName>
        <fullName evidence="2">50S ribosomal protein L32</fullName>
    </alternativeName>
</protein>
<comment type="similarity">
    <text evidence="1">Belongs to the bacterial ribosomal protein bL32 family.</text>
</comment>
<organism>
    <name type="scientific">Rickettsia bellii (strain OSU 85-389)</name>
    <dbReference type="NCBI Taxonomy" id="391896"/>
    <lineage>
        <taxon>Bacteria</taxon>
        <taxon>Pseudomonadati</taxon>
        <taxon>Pseudomonadota</taxon>
        <taxon>Alphaproteobacteria</taxon>
        <taxon>Rickettsiales</taxon>
        <taxon>Rickettsiaceae</taxon>
        <taxon>Rickettsieae</taxon>
        <taxon>Rickettsia</taxon>
        <taxon>belli group</taxon>
    </lineage>
</organism>
<keyword id="KW-0687">Ribonucleoprotein</keyword>
<keyword id="KW-0689">Ribosomal protein</keyword>
<gene>
    <name evidence="1" type="primary">rpmF</name>
    <name type="ordered locus">A1I_07285</name>
</gene>
<dbReference type="EMBL" id="CP000849">
    <property type="protein sequence ID" value="ABV79757.1"/>
    <property type="molecule type" value="Genomic_DNA"/>
</dbReference>
<dbReference type="RefSeq" id="WP_011476823.1">
    <property type="nucleotide sequence ID" value="NC_009883.1"/>
</dbReference>
<dbReference type="SMR" id="A8GY07"/>
<dbReference type="KEGG" id="rbo:A1I_07285"/>
<dbReference type="HOGENOM" id="CLU_129084_2_0_5"/>
<dbReference type="GO" id="GO:0015934">
    <property type="term" value="C:large ribosomal subunit"/>
    <property type="evidence" value="ECO:0007669"/>
    <property type="project" value="InterPro"/>
</dbReference>
<dbReference type="GO" id="GO:0003735">
    <property type="term" value="F:structural constituent of ribosome"/>
    <property type="evidence" value="ECO:0007669"/>
    <property type="project" value="InterPro"/>
</dbReference>
<dbReference type="GO" id="GO:0006412">
    <property type="term" value="P:translation"/>
    <property type="evidence" value="ECO:0007669"/>
    <property type="project" value="UniProtKB-UniRule"/>
</dbReference>
<dbReference type="Gene3D" id="1.20.5.640">
    <property type="entry name" value="Single helix bin"/>
    <property type="match status" value="1"/>
</dbReference>
<dbReference type="HAMAP" id="MF_00340">
    <property type="entry name" value="Ribosomal_bL32"/>
    <property type="match status" value="1"/>
</dbReference>
<dbReference type="InterPro" id="IPR002677">
    <property type="entry name" value="Ribosomal_bL32"/>
</dbReference>
<dbReference type="InterPro" id="IPR044957">
    <property type="entry name" value="Ribosomal_bL32_bact"/>
</dbReference>
<dbReference type="InterPro" id="IPR011332">
    <property type="entry name" value="Ribosomal_zn-bd"/>
</dbReference>
<dbReference type="NCBIfam" id="TIGR01031">
    <property type="entry name" value="rpmF_bact"/>
    <property type="match status" value="1"/>
</dbReference>
<dbReference type="PANTHER" id="PTHR35534">
    <property type="entry name" value="50S RIBOSOMAL PROTEIN L32"/>
    <property type="match status" value="1"/>
</dbReference>
<dbReference type="PANTHER" id="PTHR35534:SF1">
    <property type="entry name" value="LARGE RIBOSOMAL SUBUNIT PROTEIN BL32"/>
    <property type="match status" value="1"/>
</dbReference>
<dbReference type="Pfam" id="PF01783">
    <property type="entry name" value="Ribosomal_L32p"/>
    <property type="match status" value="1"/>
</dbReference>
<dbReference type="SUPFAM" id="SSF57829">
    <property type="entry name" value="Zn-binding ribosomal proteins"/>
    <property type="match status" value="1"/>
</dbReference>
<evidence type="ECO:0000255" key="1">
    <source>
        <dbReference type="HAMAP-Rule" id="MF_00340"/>
    </source>
</evidence>
<evidence type="ECO:0000305" key="2"/>
<proteinExistence type="inferred from homology"/>
<accession>A8GY07</accession>